<organism>
    <name type="scientific">Influenza A virus (strain A/Leningrad/134/47/1957 H2N2)</name>
    <dbReference type="NCBI Taxonomy" id="380983"/>
    <lineage>
        <taxon>Viruses</taxon>
        <taxon>Riboviria</taxon>
        <taxon>Orthornavirae</taxon>
        <taxon>Negarnaviricota</taxon>
        <taxon>Polyploviricotina</taxon>
        <taxon>Insthoviricetes</taxon>
        <taxon>Articulavirales</taxon>
        <taxon>Orthomyxoviridae</taxon>
        <taxon>Alphainfluenzavirus</taxon>
        <taxon>Alphainfluenzavirus influenzae</taxon>
        <taxon>Influenza A virus</taxon>
    </lineage>
</organism>
<comment type="function">
    <text evidence="1">RNA-dependent RNA polymerase which is responsible for replication and transcription of virus RNA segments. The transcription of viral mRNAs occurs by a unique mechanism called cap-snatching. 5' methylated caps of cellular mRNAs are cleaved after 10-13 nucleotides by PA. In turn, these short capped RNAs are used as primers by PB1 for transcription of viral mRNAs. During virus replication, PB1 initiates RNA synthesis and copy vRNA into complementary RNA (cRNA) which in turn serves as a template for the production of more vRNAs.</text>
</comment>
<comment type="catalytic activity">
    <reaction evidence="1">
        <text>RNA(n) + a ribonucleoside 5'-triphosphate = RNA(n+1) + diphosphate</text>
        <dbReference type="Rhea" id="RHEA:21248"/>
        <dbReference type="Rhea" id="RHEA-COMP:14527"/>
        <dbReference type="Rhea" id="RHEA-COMP:17342"/>
        <dbReference type="ChEBI" id="CHEBI:33019"/>
        <dbReference type="ChEBI" id="CHEBI:61557"/>
        <dbReference type="ChEBI" id="CHEBI:140395"/>
        <dbReference type="EC" id="2.7.7.48"/>
    </reaction>
</comment>
<comment type="subunit">
    <text evidence="1">Influenza RNA polymerase is composed of three subunits: PB1, PB2 and PA. Interacts (via N-terminus) with PA (via C-terminus). Interacts (via C-terminus) with PB2 (via N-terminus); this interaction is essential for transcription initiation.</text>
</comment>
<comment type="subcellular location">
    <subcellularLocation>
        <location evidence="1">Host nucleus</location>
    </subcellularLocation>
    <subcellularLocation>
        <location evidence="1">Host cytoplasm</location>
    </subcellularLocation>
</comment>
<comment type="PTM">
    <text evidence="1">Phosphorylated by host PRKCA.</text>
</comment>
<comment type="similarity">
    <text evidence="1">Belongs to the influenza viruses polymerase PB1 family.</text>
</comment>
<protein>
    <recommendedName>
        <fullName evidence="1">RNA-directed RNA polymerase catalytic subunit</fullName>
        <ecNumber evidence="1">2.7.7.48</ecNumber>
    </recommendedName>
    <alternativeName>
        <fullName evidence="1">Polymerase basic protein 1</fullName>
        <shortName evidence="1">PB1</shortName>
    </alternativeName>
    <alternativeName>
        <fullName evidence="1">RNA-directed RNA polymerase subunit P1</fullName>
    </alternativeName>
</protein>
<gene>
    <name evidence="1" type="primary">PB1</name>
</gene>
<reference key="1">
    <citation type="journal article" date="1992" name="Virology">
        <title>Sequence changes in the live attenuated, cold-adapted variants of influenza A/Leningrad/134/57 (H2N2) virus.</title>
        <authorList>
            <person name="Klimov A.I."/>
            <person name="Cox N.J."/>
            <person name="Yotov W.V."/>
            <person name="Rocha E."/>
            <person name="Alexandrova G.I."/>
            <person name="Kendal A.P."/>
        </authorList>
    </citation>
    <scope>NUCLEOTIDE SEQUENCE</scope>
</reference>
<evidence type="ECO:0000255" key="1">
    <source>
        <dbReference type="HAMAP-Rule" id="MF_04065"/>
    </source>
</evidence>
<evidence type="ECO:0000256" key="2">
    <source>
        <dbReference type="SAM" id="MobiDB-lite"/>
    </source>
</evidence>
<feature type="chain" id="PRO_0000078759" description="RNA-directed RNA polymerase catalytic subunit">
    <location>
        <begin position="1"/>
        <end position="757"/>
    </location>
</feature>
<feature type="domain" description="RdRp catalytic" evidence="1">
    <location>
        <begin position="286"/>
        <end position="483"/>
    </location>
</feature>
<feature type="region of interest" description="Disordered" evidence="2">
    <location>
        <begin position="50"/>
        <end position="82"/>
    </location>
</feature>
<feature type="region of interest" description="Promoter-binding site" evidence="1">
    <location>
        <begin position="249"/>
        <end position="256"/>
    </location>
</feature>
<feature type="short sequence motif" description="Nuclear localization signal" evidence="1">
    <location>
        <begin position="187"/>
        <end position="195"/>
    </location>
</feature>
<feature type="short sequence motif" description="Nuclear localization signal" evidence="1">
    <location>
        <begin position="203"/>
        <end position="216"/>
    </location>
</feature>
<feature type="compositionally biased region" description="Polar residues" evidence="2">
    <location>
        <begin position="55"/>
        <end position="64"/>
    </location>
</feature>
<dbReference type="EC" id="2.7.7.48" evidence="1"/>
<dbReference type="EMBL" id="M81586">
    <property type="protein sequence ID" value="AAA19212.1"/>
    <property type="molecule type" value="Unassigned_RNA"/>
</dbReference>
<dbReference type="SMR" id="P26121"/>
<dbReference type="GO" id="GO:0030430">
    <property type="term" value="C:host cell cytoplasm"/>
    <property type="evidence" value="ECO:0007669"/>
    <property type="project" value="UniProtKB-SubCell"/>
</dbReference>
<dbReference type="GO" id="GO:0042025">
    <property type="term" value="C:host cell nucleus"/>
    <property type="evidence" value="ECO:0007669"/>
    <property type="project" value="UniProtKB-SubCell"/>
</dbReference>
<dbReference type="GO" id="GO:0000166">
    <property type="term" value="F:nucleotide binding"/>
    <property type="evidence" value="ECO:0007669"/>
    <property type="project" value="UniProtKB-UniRule"/>
</dbReference>
<dbReference type="GO" id="GO:0003723">
    <property type="term" value="F:RNA binding"/>
    <property type="evidence" value="ECO:0007669"/>
    <property type="project" value="InterPro"/>
</dbReference>
<dbReference type="GO" id="GO:0003968">
    <property type="term" value="F:RNA-directed RNA polymerase activity"/>
    <property type="evidence" value="ECO:0007669"/>
    <property type="project" value="UniProtKB-UniRule"/>
</dbReference>
<dbReference type="GO" id="GO:0006351">
    <property type="term" value="P:DNA-templated transcription"/>
    <property type="evidence" value="ECO:0007669"/>
    <property type="project" value="UniProtKB-UniRule"/>
</dbReference>
<dbReference type="GO" id="GO:0039657">
    <property type="term" value="P:symbiont-mediated suppression of host gene expression"/>
    <property type="evidence" value="ECO:0007669"/>
    <property type="project" value="UniProtKB-KW"/>
</dbReference>
<dbReference type="GO" id="GO:0039523">
    <property type="term" value="P:symbiont-mediated suppression of host mRNA transcription via inhibition of RNA polymerase II activity"/>
    <property type="evidence" value="ECO:0007669"/>
    <property type="project" value="UniProtKB-UniRule"/>
</dbReference>
<dbReference type="GO" id="GO:0039694">
    <property type="term" value="P:viral RNA genome replication"/>
    <property type="evidence" value="ECO:0007669"/>
    <property type="project" value="UniProtKB-UniRule"/>
</dbReference>
<dbReference type="GO" id="GO:0019083">
    <property type="term" value="P:viral transcription"/>
    <property type="evidence" value="ECO:0007669"/>
    <property type="project" value="UniProtKB-KW"/>
</dbReference>
<dbReference type="Gene3D" id="6.10.140.720">
    <property type="match status" value="1"/>
</dbReference>
<dbReference type="HAMAP" id="MF_04065">
    <property type="entry name" value="INFV_RDRP"/>
    <property type="match status" value="1"/>
</dbReference>
<dbReference type="InterPro" id="IPR007099">
    <property type="entry name" value="RNA-dir_pol_NSvirus"/>
</dbReference>
<dbReference type="InterPro" id="IPR001407">
    <property type="entry name" value="RNA_pol_PB1_influenza"/>
</dbReference>
<dbReference type="Pfam" id="PF00602">
    <property type="entry name" value="Flu_PB1"/>
    <property type="match status" value="1"/>
</dbReference>
<dbReference type="PIRSF" id="PIRSF000827">
    <property type="entry name" value="RdRPol_OMV"/>
    <property type="match status" value="1"/>
</dbReference>
<dbReference type="PROSITE" id="PS50525">
    <property type="entry name" value="RDRP_SSRNA_NEG_SEG"/>
    <property type="match status" value="1"/>
</dbReference>
<keyword id="KW-1262">Eukaryotic host gene expression shutoff by virus</keyword>
<keyword id="KW-1191">Eukaryotic host transcription shutoff by virus</keyword>
<keyword id="KW-1035">Host cytoplasm</keyword>
<keyword id="KW-1190">Host gene expression shutoff by virus</keyword>
<keyword id="KW-1048">Host nucleus</keyword>
<keyword id="KW-0945">Host-virus interaction</keyword>
<keyword id="KW-1104">Inhibition of host RNA polymerase II by virus</keyword>
<keyword id="KW-0547">Nucleotide-binding</keyword>
<keyword id="KW-0548">Nucleotidyltransferase</keyword>
<keyword id="KW-0597">Phosphoprotein</keyword>
<keyword id="KW-0696">RNA-directed RNA polymerase</keyword>
<keyword id="KW-0808">Transferase</keyword>
<keyword id="KW-0693">Viral RNA replication</keyword>
<keyword id="KW-1195">Viral transcription</keyword>
<name>RDRP_I57A3</name>
<sequence length="757" mass="86490">MDVNPTLLFLKVPAQNAISTTFPYTGDPPYSHGTGTGYTMDTVNRTHQYSEKGKWTTNTETGAPQLNPIDGPLPEDNEPSGYAQTDCVLEAMAFLEESHPGIFENSCLETMEVIQQTRVDKLTQGRQTYDWTLNRNQPAATALANTIEVFRSNGLTANESGRLIDFLKDVIESMDKEEMEITTHFQRKRRVRDNMTKKMVTQRTIGKKKQRLNKRIYLIRALTLNTMTKDAERGKLKRRAIATPGMQIRGFVYFVETLARSICENLEQSGLPVGGNEKKAKLANVVRKMMTNSQDTELSFTITGDNTKWNENQNPRIFLAMITYITRNQPEWFRNVLSIAPIMFSNKMARLGKGYMFKSKSMKLRTQIPAEMLTSIDLKYFNESTRKKIEKIRPLLIDGTVSLSPGMMMGMFNMLSTVLGVSILNLGQKKYTKTTYWWDGLQSSDDFALIVNAPNHEGIQAGVDRFYRTCKLVGINMSKKKSYTNRTGTFEFTSFFYRYGFVANFSMELPSFGVSGINESDDMSIGVTVIKNNMINNDLGPATAQMALQLFIKDYRYTYRCHRGDTQIQTRRSFELKKLWEQTRSKAGLLISDGGPNLYNIRNLHIPEVCLKWELMDEDYQGRLCNPLNPFVSHKEIESVNNAVVMPAHGPAKSMEYDAVATTHSWIPKRNRSILNTSQRGILEDQQMYQKCCNLFEKFFPSSSYRRPVGISSMVEAMVSRARIDARIDFESGRIKKEEFAEIMKICSTIEELRRQK</sequence>
<accession>P26121</accession>
<proteinExistence type="inferred from homology"/>
<organismHost>
    <name type="scientific">Aves</name>
    <dbReference type="NCBI Taxonomy" id="8782"/>
</organismHost>
<organismHost>
    <name type="scientific">Homo sapiens</name>
    <name type="common">Human</name>
    <dbReference type="NCBI Taxonomy" id="9606"/>
</organismHost>